<keyword id="KW-0963">Cytoplasm</keyword>
<keyword id="KW-0413">Isomerase</keyword>
<keyword id="KW-0627">Porphyrin biosynthesis</keyword>
<keyword id="KW-0663">Pyridoxal phosphate</keyword>
<protein>
    <recommendedName>
        <fullName evidence="1">Glutamate-1-semialdehyde 2,1-aminomutase</fullName>
        <shortName evidence="1">GSA</shortName>
        <ecNumber evidence="1">5.4.3.8</ecNumber>
    </recommendedName>
    <alternativeName>
        <fullName evidence="1">Glutamate-1-semialdehyde aminotransferase</fullName>
        <shortName evidence="1">GSA-AT</shortName>
    </alternativeName>
</protein>
<sequence>MSRSEALFAQAQKHIPGGVNSPVRAFKSVGGTPLFFKHAEGAYVIDEDDKRYVDYVGSWGPMILGHGHPEVLDAVRNQLQHGLSYGAPTAMETEMADLVCSIVPSMEMVRMVSSGTEATMSAIRLARGYTGRDAIIKFEGCYHGHSDSLLVKAGSGLLTQGVPSSAGVPADFAKHTLTLPFNDIAAVEKTLAEVGQTVACIIVEPVAGNMNCVPPAPGFLEGLREQCDKHGVVLIFDEVMTGFRVSLGGAQGYYGITPDLSTFGKIVGGGMPVGCFGGKREIMGCIAPLGPVYQAGTLSGNPLAMAAGLTTLKLISRPGFHDELTAFTSRMLDGLQQRADAAGVPFVTTQAGAMFGLYFSGADDIVTFDDVMASDAERFKRFFHLMLEGGVYLAPSAFEAGFTSIAHGDKELQITLDAAERAFAKLK</sequence>
<gene>
    <name evidence="1" type="primary">hemL</name>
    <name type="ordered locus">PSEEN4804</name>
</gene>
<dbReference type="EC" id="5.4.3.8" evidence="1"/>
<dbReference type="EMBL" id="CT573326">
    <property type="protein sequence ID" value="CAK17461.1"/>
    <property type="molecule type" value="Genomic_DNA"/>
</dbReference>
<dbReference type="RefSeq" id="WP_011535823.1">
    <property type="nucleotide sequence ID" value="NC_008027.1"/>
</dbReference>
<dbReference type="SMR" id="Q1I4H5"/>
<dbReference type="STRING" id="384676.PSEEN4804"/>
<dbReference type="GeneID" id="32807764"/>
<dbReference type="KEGG" id="pen:PSEEN4804"/>
<dbReference type="eggNOG" id="COG0001">
    <property type="taxonomic scope" value="Bacteria"/>
</dbReference>
<dbReference type="HOGENOM" id="CLU_016922_1_5_6"/>
<dbReference type="OrthoDB" id="9801052at2"/>
<dbReference type="UniPathway" id="UPA00251">
    <property type="reaction ID" value="UER00317"/>
</dbReference>
<dbReference type="Proteomes" id="UP000000658">
    <property type="component" value="Chromosome"/>
</dbReference>
<dbReference type="GO" id="GO:0005737">
    <property type="term" value="C:cytoplasm"/>
    <property type="evidence" value="ECO:0007669"/>
    <property type="project" value="UniProtKB-SubCell"/>
</dbReference>
<dbReference type="GO" id="GO:0042286">
    <property type="term" value="F:glutamate-1-semialdehyde 2,1-aminomutase activity"/>
    <property type="evidence" value="ECO:0007669"/>
    <property type="project" value="UniProtKB-UniRule"/>
</dbReference>
<dbReference type="GO" id="GO:0030170">
    <property type="term" value="F:pyridoxal phosphate binding"/>
    <property type="evidence" value="ECO:0007669"/>
    <property type="project" value="InterPro"/>
</dbReference>
<dbReference type="GO" id="GO:0008483">
    <property type="term" value="F:transaminase activity"/>
    <property type="evidence" value="ECO:0007669"/>
    <property type="project" value="InterPro"/>
</dbReference>
<dbReference type="GO" id="GO:0006782">
    <property type="term" value="P:protoporphyrinogen IX biosynthetic process"/>
    <property type="evidence" value="ECO:0007669"/>
    <property type="project" value="UniProtKB-UniRule"/>
</dbReference>
<dbReference type="CDD" id="cd00610">
    <property type="entry name" value="OAT_like"/>
    <property type="match status" value="1"/>
</dbReference>
<dbReference type="FunFam" id="3.40.640.10:FF:000021">
    <property type="entry name" value="Glutamate-1-semialdehyde 2,1-aminomutase"/>
    <property type="match status" value="1"/>
</dbReference>
<dbReference type="Gene3D" id="3.90.1150.10">
    <property type="entry name" value="Aspartate Aminotransferase, domain 1"/>
    <property type="match status" value="1"/>
</dbReference>
<dbReference type="Gene3D" id="3.40.640.10">
    <property type="entry name" value="Type I PLP-dependent aspartate aminotransferase-like (Major domain)"/>
    <property type="match status" value="1"/>
</dbReference>
<dbReference type="HAMAP" id="MF_00375">
    <property type="entry name" value="HemL_aminotrans_3"/>
    <property type="match status" value="1"/>
</dbReference>
<dbReference type="InterPro" id="IPR004639">
    <property type="entry name" value="4pyrrol_synth_GluAld_NH2Trfase"/>
</dbReference>
<dbReference type="InterPro" id="IPR005814">
    <property type="entry name" value="Aminotrans_3"/>
</dbReference>
<dbReference type="InterPro" id="IPR049704">
    <property type="entry name" value="Aminotrans_3_PPA_site"/>
</dbReference>
<dbReference type="InterPro" id="IPR015424">
    <property type="entry name" value="PyrdxlP-dep_Trfase"/>
</dbReference>
<dbReference type="InterPro" id="IPR015421">
    <property type="entry name" value="PyrdxlP-dep_Trfase_major"/>
</dbReference>
<dbReference type="InterPro" id="IPR015422">
    <property type="entry name" value="PyrdxlP-dep_Trfase_small"/>
</dbReference>
<dbReference type="NCBIfam" id="TIGR00713">
    <property type="entry name" value="hemL"/>
    <property type="match status" value="1"/>
</dbReference>
<dbReference type="NCBIfam" id="NF000818">
    <property type="entry name" value="PRK00062.1"/>
    <property type="match status" value="1"/>
</dbReference>
<dbReference type="PANTHER" id="PTHR43713">
    <property type="entry name" value="GLUTAMATE-1-SEMIALDEHYDE 2,1-AMINOMUTASE"/>
    <property type="match status" value="1"/>
</dbReference>
<dbReference type="PANTHER" id="PTHR43713:SF3">
    <property type="entry name" value="GLUTAMATE-1-SEMIALDEHYDE 2,1-AMINOMUTASE 1, CHLOROPLASTIC-RELATED"/>
    <property type="match status" value="1"/>
</dbReference>
<dbReference type="Pfam" id="PF00202">
    <property type="entry name" value="Aminotran_3"/>
    <property type="match status" value="1"/>
</dbReference>
<dbReference type="SUPFAM" id="SSF53383">
    <property type="entry name" value="PLP-dependent transferases"/>
    <property type="match status" value="1"/>
</dbReference>
<dbReference type="PROSITE" id="PS00600">
    <property type="entry name" value="AA_TRANSFER_CLASS_3"/>
    <property type="match status" value="1"/>
</dbReference>
<reference key="1">
    <citation type="journal article" date="2006" name="Nat. Biotechnol.">
        <title>Complete genome sequence of the entomopathogenic and metabolically versatile soil bacterium Pseudomonas entomophila.</title>
        <authorList>
            <person name="Vodovar N."/>
            <person name="Vallenet D."/>
            <person name="Cruveiller S."/>
            <person name="Rouy Z."/>
            <person name="Barbe V."/>
            <person name="Acosta C."/>
            <person name="Cattolico L."/>
            <person name="Jubin C."/>
            <person name="Lajus A."/>
            <person name="Segurens B."/>
            <person name="Vacherie B."/>
            <person name="Wincker P."/>
            <person name="Weissenbach J."/>
            <person name="Lemaitre B."/>
            <person name="Medigue C."/>
            <person name="Boccard F."/>
        </authorList>
    </citation>
    <scope>NUCLEOTIDE SEQUENCE [LARGE SCALE GENOMIC DNA]</scope>
    <source>
        <strain>L48</strain>
    </source>
</reference>
<organism>
    <name type="scientific">Pseudomonas entomophila (strain L48)</name>
    <dbReference type="NCBI Taxonomy" id="384676"/>
    <lineage>
        <taxon>Bacteria</taxon>
        <taxon>Pseudomonadati</taxon>
        <taxon>Pseudomonadota</taxon>
        <taxon>Gammaproteobacteria</taxon>
        <taxon>Pseudomonadales</taxon>
        <taxon>Pseudomonadaceae</taxon>
        <taxon>Pseudomonas</taxon>
    </lineage>
</organism>
<name>GSA_PSEE4</name>
<comment type="catalytic activity">
    <reaction evidence="1">
        <text>(S)-4-amino-5-oxopentanoate = 5-aminolevulinate</text>
        <dbReference type="Rhea" id="RHEA:14265"/>
        <dbReference type="ChEBI" id="CHEBI:57501"/>
        <dbReference type="ChEBI" id="CHEBI:356416"/>
        <dbReference type="EC" id="5.4.3.8"/>
    </reaction>
</comment>
<comment type="cofactor">
    <cofactor evidence="1">
        <name>pyridoxal 5'-phosphate</name>
        <dbReference type="ChEBI" id="CHEBI:597326"/>
    </cofactor>
</comment>
<comment type="pathway">
    <text evidence="1">Porphyrin-containing compound metabolism; protoporphyrin-IX biosynthesis; 5-aminolevulinate from L-glutamyl-tRNA(Glu): step 2/2.</text>
</comment>
<comment type="subunit">
    <text evidence="1">Homodimer.</text>
</comment>
<comment type="subcellular location">
    <subcellularLocation>
        <location evidence="1">Cytoplasm</location>
    </subcellularLocation>
</comment>
<comment type="similarity">
    <text evidence="1">Belongs to the class-III pyridoxal-phosphate-dependent aminotransferase family. HemL subfamily.</text>
</comment>
<feature type="chain" id="PRO_0000300937" description="Glutamate-1-semialdehyde 2,1-aminomutase">
    <location>
        <begin position="1"/>
        <end position="427"/>
    </location>
</feature>
<feature type="modified residue" description="N6-(pyridoxal phosphate)lysine" evidence="1">
    <location>
        <position position="265"/>
    </location>
</feature>
<evidence type="ECO:0000255" key="1">
    <source>
        <dbReference type="HAMAP-Rule" id="MF_00375"/>
    </source>
</evidence>
<proteinExistence type="inferred from homology"/>
<accession>Q1I4H5</accession>